<feature type="chain" id="PRO_1000054959" description="Small ribosomal subunit protein uS17">
    <location>
        <begin position="1"/>
        <end position="85"/>
    </location>
</feature>
<name>RS17_HAEIE</name>
<sequence>MTDKIRSVQGKVVSDKMEKSFVVAIERKVKHPLYGKFIRRTTKLHVHDENNEAKVGDTVEIRECRPLSKTKSWTLVRVVEKAVIA</sequence>
<organism>
    <name type="scientific">Haemophilus influenzae (strain PittEE)</name>
    <dbReference type="NCBI Taxonomy" id="374930"/>
    <lineage>
        <taxon>Bacteria</taxon>
        <taxon>Pseudomonadati</taxon>
        <taxon>Pseudomonadota</taxon>
        <taxon>Gammaproteobacteria</taxon>
        <taxon>Pasteurellales</taxon>
        <taxon>Pasteurellaceae</taxon>
        <taxon>Haemophilus</taxon>
    </lineage>
</organism>
<evidence type="ECO:0000255" key="1">
    <source>
        <dbReference type="HAMAP-Rule" id="MF_01345"/>
    </source>
</evidence>
<evidence type="ECO:0000305" key="2"/>
<comment type="function">
    <text evidence="1">One of the primary rRNA binding proteins, it binds specifically to the 5'-end of 16S ribosomal RNA.</text>
</comment>
<comment type="subunit">
    <text evidence="1">Part of the 30S ribosomal subunit.</text>
</comment>
<comment type="similarity">
    <text evidence="1">Belongs to the universal ribosomal protein uS17 family.</text>
</comment>
<protein>
    <recommendedName>
        <fullName evidence="1">Small ribosomal subunit protein uS17</fullName>
    </recommendedName>
    <alternativeName>
        <fullName evidence="2">30S ribosomal protein S17</fullName>
    </alternativeName>
</protein>
<accession>A5UDT8</accession>
<keyword id="KW-0687">Ribonucleoprotein</keyword>
<keyword id="KW-0689">Ribosomal protein</keyword>
<keyword id="KW-0694">RNA-binding</keyword>
<keyword id="KW-0699">rRNA-binding</keyword>
<dbReference type="EMBL" id="CP000671">
    <property type="protein sequence ID" value="ABQ98939.1"/>
    <property type="molecule type" value="Genomic_DNA"/>
</dbReference>
<dbReference type="SMR" id="A5UDT8"/>
<dbReference type="KEGG" id="hip:CGSHiEE_08130"/>
<dbReference type="HOGENOM" id="CLU_073626_1_1_6"/>
<dbReference type="GO" id="GO:0022627">
    <property type="term" value="C:cytosolic small ribosomal subunit"/>
    <property type="evidence" value="ECO:0007669"/>
    <property type="project" value="TreeGrafter"/>
</dbReference>
<dbReference type="GO" id="GO:0019843">
    <property type="term" value="F:rRNA binding"/>
    <property type="evidence" value="ECO:0007669"/>
    <property type="project" value="UniProtKB-UniRule"/>
</dbReference>
<dbReference type="GO" id="GO:0003735">
    <property type="term" value="F:structural constituent of ribosome"/>
    <property type="evidence" value="ECO:0007669"/>
    <property type="project" value="InterPro"/>
</dbReference>
<dbReference type="GO" id="GO:0006412">
    <property type="term" value="P:translation"/>
    <property type="evidence" value="ECO:0007669"/>
    <property type="project" value="UniProtKB-UniRule"/>
</dbReference>
<dbReference type="CDD" id="cd00364">
    <property type="entry name" value="Ribosomal_uS17"/>
    <property type="match status" value="1"/>
</dbReference>
<dbReference type="FunFam" id="2.40.50.140:FF:000014">
    <property type="entry name" value="30S ribosomal protein S17"/>
    <property type="match status" value="1"/>
</dbReference>
<dbReference type="Gene3D" id="2.40.50.140">
    <property type="entry name" value="Nucleic acid-binding proteins"/>
    <property type="match status" value="1"/>
</dbReference>
<dbReference type="HAMAP" id="MF_01345_B">
    <property type="entry name" value="Ribosomal_uS17_B"/>
    <property type="match status" value="1"/>
</dbReference>
<dbReference type="InterPro" id="IPR012340">
    <property type="entry name" value="NA-bd_OB-fold"/>
</dbReference>
<dbReference type="InterPro" id="IPR000266">
    <property type="entry name" value="Ribosomal_uS17"/>
</dbReference>
<dbReference type="InterPro" id="IPR019984">
    <property type="entry name" value="Ribosomal_uS17_bact/chlr"/>
</dbReference>
<dbReference type="InterPro" id="IPR019979">
    <property type="entry name" value="Ribosomal_uS17_CS"/>
</dbReference>
<dbReference type="NCBIfam" id="NF004123">
    <property type="entry name" value="PRK05610.1"/>
    <property type="match status" value="1"/>
</dbReference>
<dbReference type="NCBIfam" id="TIGR03635">
    <property type="entry name" value="uS17_bact"/>
    <property type="match status" value="1"/>
</dbReference>
<dbReference type="PANTHER" id="PTHR10744">
    <property type="entry name" value="40S RIBOSOMAL PROTEIN S11 FAMILY MEMBER"/>
    <property type="match status" value="1"/>
</dbReference>
<dbReference type="PANTHER" id="PTHR10744:SF1">
    <property type="entry name" value="SMALL RIBOSOMAL SUBUNIT PROTEIN US17M"/>
    <property type="match status" value="1"/>
</dbReference>
<dbReference type="Pfam" id="PF00366">
    <property type="entry name" value="Ribosomal_S17"/>
    <property type="match status" value="1"/>
</dbReference>
<dbReference type="PRINTS" id="PR00973">
    <property type="entry name" value="RIBOSOMALS17"/>
</dbReference>
<dbReference type="SUPFAM" id="SSF50249">
    <property type="entry name" value="Nucleic acid-binding proteins"/>
    <property type="match status" value="1"/>
</dbReference>
<dbReference type="PROSITE" id="PS00056">
    <property type="entry name" value="RIBOSOMAL_S17"/>
    <property type="match status" value="1"/>
</dbReference>
<reference key="1">
    <citation type="journal article" date="2007" name="Genome Biol.">
        <title>Characterization and modeling of the Haemophilus influenzae core and supragenomes based on the complete genomic sequences of Rd and 12 clinical nontypeable strains.</title>
        <authorList>
            <person name="Hogg J.S."/>
            <person name="Hu F.Z."/>
            <person name="Janto B."/>
            <person name="Boissy R."/>
            <person name="Hayes J."/>
            <person name="Keefe R."/>
            <person name="Post J.C."/>
            <person name="Ehrlich G.D."/>
        </authorList>
    </citation>
    <scope>NUCLEOTIDE SEQUENCE [LARGE SCALE GENOMIC DNA]</scope>
    <source>
        <strain>PittEE</strain>
    </source>
</reference>
<gene>
    <name evidence="1" type="primary">rpsQ</name>
    <name type="ordered locus">CGSHiEE_08130</name>
</gene>
<proteinExistence type="inferred from homology"/>